<proteinExistence type="inferred from homology"/>
<protein>
    <recommendedName>
        <fullName evidence="1">Large ribosomal subunit protein bL36</fullName>
    </recommendedName>
    <alternativeName>
        <fullName evidence="2">50S ribosomal protein L36</fullName>
    </alternativeName>
</protein>
<reference key="1">
    <citation type="submission" date="2008-08" db="EMBL/GenBank/DDBJ databases">
        <title>Complete sequence of Vibrio fischeri strain MJ11.</title>
        <authorList>
            <person name="Mandel M.J."/>
            <person name="Stabb E.V."/>
            <person name="Ruby E.G."/>
            <person name="Ferriera S."/>
            <person name="Johnson J."/>
            <person name="Kravitz S."/>
            <person name="Beeson K."/>
            <person name="Sutton G."/>
            <person name="Rogers Y.-H."/>
            <person name="Friedman R."/>
            <person name="Frazier M."/>
            <person name="Venter J.C."/>
        </authorList>
    </citation>
    <scope>NUCLEOTIDE SEQUENCE [LARGE SCALE GENOMIC DNA]</scope>
    <source>
        <strain>MJ11</strain>
    </source>
</reference>
<evidence type="ECO:0000255" key="1">
    <source>
        <dbReference type="HAMAP-Rule" id="MF_00251"/>
    </source>
</evidence>
<evidence type="ECO:0000305" key="2"/>
<name>RL36_ALIFM</name>
<accession>B5FGD7</accession>
<keyword id="KW-0687">Ribonucleoprotein</keyword>
<keyword id="KW-0689">Ribosomal protein</keyword>
<sequence length="37" mass="4290">MKVRASVKKICRNCKVIKRNGVVRVICVEPKHKQRQG</sequence>
<comment type="similarity">
    <text evidence="1">Belongs to the bacterial ribosomal protein bL36 family.</text>
</comment>
<gene>
    <name evidence="1" type="primary">rpmJ</name>
    <name type="ordered locus">VFMJ11_0246</name>
</gene>
<dbReference type="EMBL" id="CP001139">
    <property type="protein sequence ID" value="ACH64991.1"/>
    <property type="molecule type" value="Genomic_DNA"/>
</dbReference>
<dbReference type="RefSeq" id="WP_005417265.1">
    <property type="nucleotide sequence ID" value="NC_011184.1"/>
</dbReference>
<dbReference type="SMR" id="B5FGD7"/>
<dbReference type="GeneID" id="56276434"/>
<dbReference type="KEGG" id="vfm:VFMJ11_0246"/>
<dbReference type="HOGENOM" id="CLU_135723_6_2_6"/>
<dbReference type="Proteomes" id="UP000001857">
    <property type="component" value="Chromosome I"/>
</dbReference>
<dbReference type="GO" id="GO:0005737">
    <property type="term" value="C:cytoplasm"/>
    <property type="evidence" value="ECO:0007669"/>
    <property type="project" value="UniProtKB-ARBA"/>
</dbReference>
<dbReference type="GO" id="GO:1990904">
    <property type="term" value="C:ribonucleoprotein complex"/>
    <property type="evidence" value="ECO:0007669"/>
    <property type="project" value="UniProtKB-KW"/>
</dbReference>
<dbReference type="GO" id="GO:0005840">
    <property type="term" value="C:ribosome"/>
    <property type="evidence" value="ECO:0007669"/>
    <property type="project" value="UniProtKB-KW"/>
</dbReference>
<dbReference type="GO" id="GO:0003735">
    <property type="term" value="F:structural constituent of ribosome"/>
    <property type="evidence" value="ECO:0007669"/>
    <property type="project" value="InterPro"/>
</dbReference>
<dbReference type="GO" id="GO:0006412">
    <property type="term" value="P:translation"/>
    <property type="evidence" value="ECO:0007669"/>
    <property type="project" value="UniProtKB-UniRule"/>
</dbReference>
<dbReference type="HAMAP" id="MF_00251">
    <property type="entry name" value="Ribosomal_bL36"/>
    <property type="match status" value="1"/>
</dbReference>
<dbReference type="InterPro" id="IPR000473">
    <property type="entry name" value="Ribosomal_bL36"/>
</dbReference>
<dbReference type="InterPro" id="IPR035977">
    <property type="entry name" value="Ribosomal_bL36_sp"/>
</dbReference>
<dbReference type="NCBIfam" id="TIGR01022">
    <property type="entry name" value="rpmJ_bact"/>
    <property type="match status" value="1"/>
</dbReference>
<dbReference type="PANTHER" id="PTHR42888">
    <property type="entry name" value="50S RIBOSOMAL PROTEIN L36, CHLOROPLASTIC"/>
    <property type="match status" value="1"/>
</dbReference>
<dbReference type="PANTHER" id="PTHR42888:SF1">
    <property type="entry name" value="LARGE RIBOSOMAL SUBUNIT PROTEIN BL36C"/>
    <property type="match status" value="1"/>
</dbReference>
<dbReference type="Pfam" id="PF00444">
    <property type="entry name" value="Ribosomal_L36"/>
    <property type="match status" value="1"/>
</dbReference>
<dbReference type="SUPFAM" id="SSF57840">
    <property type="entry name" value="Ribosomal protein L36"/>
    <property type="match status" value="1"/>
</dbReference>
<dbReference type="PROSITE" id="PS00828">
    <property type="entry name" value="RIBOSOMAL_L36"/>
    <property type="match status" value="1"/>
</dbReference>
<organism>
    <name type="scientific">Aliivibrio fischeri (strain MJ11)</name>
    <name type="common">Vibrio fischeri</name>
    <dbReference type="NCBI Taxonomy" id="388396"/>
    <lineage>
        <taxon>Bacteria</taxon>
        <taxon>Pseudomonadati</taxon>
        <taxon>Pseudomonadota</taxon>
        <taxon>Gammaproteobacteria</taxon>
        <taxon>Vibrionales</taxon>
        <taxon>Vibrionaceae</taxon>
        <taxon>Aliivibrio</taxon>
    </lineage>
</organism>
<feature type="chain" id="PRO_1000101081" description="Large ribosomal subunit protein bL36">
    <location>
        <begin position="1"/>
        <end position="37"/>
    </location>
</feature>